<proteinExistence type="inferred from homology"/>
<dbReference type="EMBL" id="AY596297">
    <property type="protein sequence ID" value="AAV47907.1"/>
    <property type="molecule type" value="Genomic_DNA"/>
</dbReference>
<dbReference type="RefSeq" id="WP_007189198.1">
    <property type="nucleotide sequence ID" value="NZ_CP039138.1"/>
</dbReference>
<dbReference type="SMR" id="Q5UXU6"/>
<dbReference type="STRING" id="272569.rrnAC3203"/>
<dbReference type="PaxDb" id="272569-rrnAC3203"/>
<dbReference type="EnsemblBacteria" id="AAV47907">
    <property type="protein sequence ID" value="AAV47907"/>
    <property type="gene ID" value="rrnAC3203"/>
</dbReference>
<dbReference type="GeneID" id="40154007"/>
<dbReference type="KEGG" id="hma:rrnAC3203"/>
<dbReference type="PATRIC" id="fig|272569.17.peg.3741"/>
<dbReference type="eggNOG" id="arCOG01560">
    <property type="taxonomic scope" value="Archaea"/>
</dbReference>
<dbReference type="HOGENOM" id="CLU_002656_3_3_2"/>
<dbReference type="Proteomes" id="UP000001169">
    <property type="component" value="Chromosome I"/>
</dbReference>
<dbReference type="GO" id="GO:0005737">
    <property type="term" value="C:cytoplasm"/>
    <property type="evidence" value="ECO:0007669"/>
    <property type="project" value="TreeGrafter"/>
</dbReference>
<dbReference type="GO" id="GO:0005525">
    <property type="term" value="F:GTP binding"/>
    <property type="evidence" value="ECO:0007669"/>
    <property type="project" value="UniProtKB-KW"/>
</dbReference>
<dbReference type="GO" id="GO:0003924">
    <property type="term" value="F:GTPase activity"/>
    <property type="evidence" value="ECO:0007669"/>
    <property type="project" value="UniProtKB-UniRule"/>
</dbReference>
<dbReference type="GO" id="GO:0003743">
    <property type="term" value="F:translation initiation factor activity"/>
    <property type="evidence" value="ECO:0007669"/>
    <property type="project" value="UniProtKB-UniRule"/>
</dbReference>
<dbReference type="CDD" id="cd03703">
    <property type="entry name" value="aeIF5B_II"/>
    <property type="match status" value="1"/>
</dbReference>
<dbReference type="CDD" id="cd16266">
    <property type="entry name" value="IF2_aeIF5B_IV"/>
    <property type="match status" value="1"/>
</dbReference>
<dbReference type="CDD" id="cd01887">
    <property type="entry name" value="IF2_eIF5B"/>
    <property type="match status" value="1"/>
</dbReference>
<dbReference type="FunFam" id="3.40.50.300:FF:000112">
    <property type="entry name" value="Eukaryotic translation initiation factor 5B"/>
    <property type="match status" value="1"/>
</dbReference>
<dbReference type="FunFam" id="2.40.30.10:FF:000013">
    <property type="entry name" value="eukaryotic translation initiation factor 5B"/>
    <property type="match status" value="1"/>
</dbReference>
<dbReference type="FunFam" id="3.40.50.10050:FF:000001">
    <property type="entry name" value="Translation initiation factor IF-2"/>
    <property type="match status" value="1"/>
</dbReference>
<dbReference type="Gene3D" id="3.40.50.300">
    <property type="entry name" value="P-loop containing nucleotide triphosphate hydrolases"/>
    <property type="match status" value="1"/>
</dbReference>
<dbReference type="Gene3D" id="2.40.30.10">
    <property type="entry name" value="Translation factors"/>
    <property type="match status" value="2"/>
</dbReference>
<dbReference type="Gene3D" id="3.40.50.10050">
    <property type="entry name" value="Translation initiation factor IF- 2, domain 3"/>
    <property type="match status" value="1"/>
</dbReference>
<dbReference type="HAMAP" id="MF_00100_A">
    <property type="entry name" value="IF_2_A"/>
    <property type="match status" value="1"/>
</dbReference>
<dbReference type="InterPro" id="IPR029459">
    <property type="entry name" value="EFTU-type"/>
</dbReference>
<dbReference type="InterPro" id="IPR027417">
    <property type="entry name" value="P-loop_NTPase"/>
</dbReference>
<dbReference type="InterPro" id="IPR005225">
    <property type="entry name" value="Small_GTP-bd"/>
</dbReference>
<dbReference type="InterPro" id="IPR000795">
    <property type="entry name" value="T_Tr_GTP-bd_dom"/>
</dbReference>
<dbReference type="InterPro" id="IPR004544">
    <property type="entry name" value="TF_aIF-2_arc"/>
</dbReference>
<dbReference type="InterPro" id="IPR015760">
    <property type="entry name" value="TIF_IF2"/>
</dbReference>
<dbReference type="InterPro" id="IPR023115">
    <property type="entry name" value="TIF_IF2_dom3"/>
</dbReference>
<dbReference type="InterPro" id="IPR036925">
    <property type="entry name" value="TIF_IF2_dom3_sf"/>
</dbReference>
<dbReference type="InterPro" id="IPR009000">
    <property type="entry name" value="Transl_B-barrel_sf"/>
</dbReference>
<dbReference type="NCBIfam" id="TIGR00491">
    <property type="entry name" value="aIF-2"/>
    <property type="match status" value="1"/>
</dbReference>
<dbReference type="NCBIfam" id="NF003078">
    <property type="entry name" value="PRK04004.1"/>
    <property type="match status" value="1"/>
</dbReference>
<dbReference type="NCBIfam" id="TIGR00231">
    <property type="entry name" value="small_GTP"/>
    <property type="match status" value="1"/>
</dbReference>
<dbReference type="PANTHER" id="PTHR43381:SF4">
    <property type="entry name" value="EUKARYOTIC TRANSLATION INITIATION FACTOR 5B"/>
    <property type="match status" value="1"/>
</dbReference>
<dbReference type="PANTHER" id="PTHR43381">
    <property type="entry name" value="TRANSLATION INITIATION FACTOR IF-2-RELATED"/>
    <property type="match status" value="1"/>
</dbReference>
<dbReference type="Pfam" id="PF00009">
    <property type="entry name" value="GTP_EFTU"/>
    <property type="match status" value="1"/>
</dbReference>
<dbReference type="Pfam" id="PF14578">
    <property type="entry name" value="GTP_EFTU_D4"/>
    <property type="match status" value="1"/>
</dbReference>
<dbReference type="Pfam" id="PF11987">
    <property type="entry name" value="IF-2"/>
    <property type="match status" value="1"/>
</dbReference>
<dbReference type="PRINTS" id="PR00315">
    <property type="entry name" value="ELONGATNFCT"/>
</dbReference>
<dbReference type="SUPFAM" id="SSF52156">
    <property type="entry name" value="Initiation factor IF2/eIF5b, domain 3"/>
    <property type="match status" value="1"/>
</dbReference>
<dbReference type="SUPFAM" id="SSF52540">
    <property type="entry name" value="P-loop containing nucleoside triphosphate hydrolases"/>
    <property type="match status" value="1"/>
</dbReference>
<dbReference type="SUPFAM" id="SSF50447">
    <property type="entry name" value="Translation proteins"/>
    <property type="match status" value="1"/>
</dbReference>
<dbReference type="PROSITE" id="PS51722">
    <property type="entry name" value="G_TR_2"/>
    <property type="match status" value="1"/>
</dbReference>
<name>IF2P_HALMA</name>
<reference key="1">
    <citation type="journal article" date="2004" name="Genome Res.">
        <title>Genome sequence of Haloarcula marismortui: a halophilic archaeon from the Dead Sea.</title>
        <authorList>
            <person name="Baliga N.S."/>
            <person name="Bonneau R."/>
            <person name="Facciotti M.T."/>
            <person name="Pan M."/>
            <person name="Glusman G."/>
            <person name="Deutsch E.W."/>
            <person name="Shannon P."/>
            <person name="Chiu Y."/>
            <person name="Weng R.S."/>
            <person name="Gan R.R."/>
            <person name="Hung P."/>
            <person name="Date S.V."/>
            <person name="Marcotte E."/>
            <person name="Hood L."/>
            <person name="Ng W.V."/>
        </authorList>
    </citation>
    <scope>NUCLEOTIDE SEQUENCE [LARGE SCALE GENOMIC DNA]</scope>
    <source>
        <strain>ATCC 43049 / DSM 3752 / JCM 8966 / VKM B-1809</strain>
    </source>
</reference>
<sequence>MSDTDPTTATDDTLRTPIVAVLGHVDHGKTSLLDKIRGSAVTAGESGAITQHIGATAVPLDVISEIAGDLVDPTDFDLPGLLFIDTPGHHSFSTLRSRGGALADIAILVVDVNDGFQPQTLEAIDILKRTQTPFIVAANKIDTVPGWNPNEGQPVQQTMDAQSDRVQSDLNEKLYEIIGELSDNGFSADMYWRVQNFQANIGVVPVSAETSEGIPDLLTVMMGLSQRYMKEEMEIDTSGPGVGTVLEVKDTQGFGTTLDAIIYDGTIRNDDTIVVGGLQGPIITDVRALLRPRPLEEIRTEQEFEQVDEVAAADGVKIAAPELGDAMAGAPIRVIRDRDRSEVIAEVEEELAEIEVTTQEEGVVIKADTLGSLEALSSTLEEEEIPVMRAEVGAVAPRDVRVAETAGESTNQAILAFSVDVLDDARDLAEQEDVKLFEDDVIYQLVESYDDHVTAIEEAQQEQILENITRPAKFRILQDHTFRQSDPAVVGVEILSGELRRNVNVVRWENGEANRVGTLKTIQDEGEDVDSARAGERMAVSIQGPTVGRQVEEGDDLWVEIPEKHAKILEQELKEDISVDEREALSMYLEKHRNRDPFWGK</sequence>
<accession>Q5UXU6</accession>
<evidence type="ECO:0000250" key="1"/>
<evidence type="ECO:0000255" key="2">
    <source>
        <dbReference type="HAMAP-Rule" id="MF_00100"/>
    </source>
</evidence>
<organism>
    <name type="scientific">Haloarcula marismortui (strain ATCC 43049 / DSM 3752 / JCM 8966 / VKM B-1809)</name>
    <name type="common">Halobacterium marismortui</name>
    <dbReference type="NCBI Taxonomy" id="272569"/>
    <lineage>
        <taxon>Archaea</taxon>
        <taxon>Methanobacteriati</taxon>
        <taxon>Methanobacteriota</taxon>
        <taxon>Stenosarchaea group</taxon>
        <taxon>Halobacteria</taxon>
        <taxon>Halobacteriales</taxon>
        <taxon>Haloarculaceae</taxon>
        <taxon>Haloarcula</taxon>
    </lineage>
</organism>
<feature type="chain" id="PRO_0000137299" description="Probable translation initiation factor IF-2">
    <location>
        <begin position="1"/>
        <end position="601"/>
    </location>
</feature>
<feature type="domain" description="tr-type G">
    <location>
        <begin position="14"/>
        <end position="229"/>
    </location>
</feature>
<feature type="region of interest" description="G1" evidence="1">
    <location>
        <begin position="23"/>
        <end position="30"/>
    </location>
</feature>
<feature type="region of interest" description="G2" evidence="1">
    <location>
        <begin position="48"/>
        <end position="52"/>
    </location>
</feature>
<feature type="region of interest" description="G3" evidence="1">
    <location>
        <begin position="85"/>
        <end position="88"/>
    </location>
</feature>
<feature type="region of interest" description="G4" evidence="1">
    <location>
        <begin position="139"/>
        <end position="142"/>
    </location>
</feature>
<feature type="region of interest" description="G5" evidence="1">
    <location>
        <begin position="207"/>
        <end position="209"/>
    </location>
</feature>
<feature type="binding site" evidence="2">
    <location>
        <begin position="23"/>
        <end position="30"/>
    </location>
    <ligand>
        <name>GTP</name>
        <dbReference type="ChEBI" id="CHEBI:37565"/>
    </ligand>
</feature>
<feature type="binding site" evidence="2">
    <location>
        <begin position="85"/>
        <end position="89"/>
    </location>
    <ligand>
        <name>GTP</name>
        <dbReference type="ChEBI" id="CHEBI:37565"/>
    </ligand>
</feature>
<feature type="binding site" evidence="2">
    <location>
        <begin position="139"/>
        <end position="142"/>
    </location>
    <ligand>
        <name>GTP</name>
        <dbReference type="ChEBI" id="CHEBI:37565"/>
    </ligand>
</feature>
<protein>
    <recommendedName>
        <fullName evidence="2">Probable translation initiation factor IF-2</fullName>
    </recommendedName>
</protein>
<gene>
    <name evidence="2" type="primary">infB</name>
    <name type="ordered locus">rrnAC3203</name>
</gene>
<keyword id="KW-0342">GTP-binding</keyword>
<keyword id="KW-0396">Initiation factor</keyword>
<keyword id="KW-0547">Nucleotide-binding</keyword>
<keyword id="KW-0648">Protein biosynthesis</keyword>
<keyword id="KW-1185">Reference proteome</keyword>
<comment type="function">
    <text evidence="2">Function in general translation initiation by promoting the binding of the formylmethionine-tRNA to ribosomes. Seems to function along with eIF-2.</text>
</comment>
<comment type="similarity">
    <text evidence="2">Belongs to the TRAFAC class translation factor GTPase superfamily. Classic translation factor GTPase family. IF-2 subfamily.</text>
</comment>